<organism evidence="8">
    <name type="scientific">Ixodes ricinus</name>
    <name type="common">Common tick</name>
    <name type="synonym">Acarus ricinus</name>
    <dbReference type="NCBI Taxonomy" id="34613"/>
    <lineage>
        <taxon>Eukaryota</taxon>
        <taxon>Metazoa</taxon>
        <taxon>Ecdysozoa</taxon>
        <taxon>Arthropoda</taxon>
        <taxon>Chelicerata</taxon>
        <taxon>Arachnida</taxon>
        <taxon>Acari</taxon>
        <taxon>Parasitiformes</taxon>
        <taxon>Ixodida</taxon>
        <taxon>Ixodoidea</taxon>
        <taxon>Ixodidae</taxon>
        <taxon>Ixodinae</taxon>
        <taxon>Ixodes</taxon>
    </lineage>
</organism>
<keyword id="KW-1015">Disulfide bond</keyword>
<keyword id="KW-0325">Glycoprotein</keyword>
<keyword id="KW-0964">Secreted</keyword>
<keyword id="KW-0732">Signal</keyword>
<evidence type="ECO:0000250" key="1">
    <source>
        <dbReference type="UniProtKB" id="P0C8E8"/>
    </source>
</evidence>
<evidence type="ECO:0000255" key="2"/>
<evidence type="ECO:0000255" key="3">
    <source>
        <dbReference type="PROSITE-ProRule" id="PRU00498"/>
    </source>
</evidence>
<evidence type="ECO:0000256" key="4">
    <source>
        <dbReference type="SAM" id="MobiDB-lite"/>
    </source>
</evidence>
<evidence type="ECO:0000269" key="5">
    <source>
    </source>
</evidence>
<evidence type="ECO:0000303" key="6">
    <source>
    </source>
</evidence>
<evidence type="ECO:0000305" key="7"/>
<evidence type="ECO:0000312" key="8">
    <source>
        <dbReference type="EMBL" id="JAA68746.1"/>
    </source>
</evidence>
<accession>A0A0K8RCE3</accession>
<reference evidence="8" key="1">
    <citation type="journal article" date="2013" name="FASEB J.">
        <title>De novo Ixodes ricinus salivary gland transcriptome analysis using two next-generation sequencing methodologies.</title>
        <authorList>
            <person name="Schwarz A."/>
            <person name="von Reumont B.M."/>
            <person name="Erhart J."/>
            <person name="Chagas A.C."/>
            <person name="Ribeiro J.M."/>
            <person name="Kotsyfakis M."/>
        </authorList>
    </citation>
    <scope>NUCLEOTIDE SEQUENCE [LARGE SCALE MRNA]</scope>
    <source>
        <tissue evidence="8">Salivary gland</tissue>
    </source>
</reference>
<reference evidence="7" key="2">
    <citation type="journal article" date="2019" name="J. Biol. Chem.">
        <title>A knottin scaffold directs the CXC-chemokine-binding specificity of tick evasins.</title>
        <authorList>
            <person name="Lee A.W."/>
            <person name="Deruaz M."/>
            <person name="Lynch C."/>
            <person name="Davies G."/>
            <person name="Singh K."/>
            <person name="Alenazi Y."/>
            <person name="Eaton J.R.O."/>
            <person name="Kawamura A."/>
            <person name="Shaw J."/>
            <person name="Proudfoot A.E.I."/>
            <person name="Dias J.M."/>
            <person name="Bhattacharya S."/>
        </authorList>
    </citation>
    <scope>FUNCTION</scope>
</reference>
<protein>
    <recommendedName>
        <fullName evidence="6">Evasin P1095</fullName>
    </recommendedName>
</protein>
<sequence>MELNAFTILQIAVFIAVGYHANTHSPVAGSEVQKLTSDPNDDIDVSYCGMNCTVVNGKSDECSENCKCLHEGDDPKGICVAITYFGDWGDPNDDPKINEATPQTQIFEKKRK</sequence>
<feature type="signal peptide" evidence="2">
    <location>
        <begin position="1"/>
        <end position="23"/>
    </location>
</feature>
<feature type="chain" id="PRO_5005516850" description="Evasin P1095" evidence="2">
    <location>
        <begin position="24"/>
        <end position="112"/>
    </location>
</feature>
<feature type="region of interest" description="Disordered" evidence="4">
    <location>
        <begin position="89"/>
        <end position="112"/>
    </location>
</feature>
<feature type="glycosylation site" description="N-linked (GlcNAc...) asparagine" evidence="3">
    <location>
        <position position="51"/>
    </location>
</feature>
<feature type="disulfide bond" evidence="1">
    <location>
        <begin position="48"/>
        <end position="66"/>
    </location>
</feature>
<feature type="disulfide bond" evidence="1">
    <location>
        <begin position="52"/>
        <end position="68"/>
    </location>
</feature>
<feature type="disulfide bond" evidence="1">
    <location>
        <begin position="62"/>
        <end position="79"/>
    </location>
</feature>
<proteinExistence type="inferred from homology"/>
<comment type="function">
    <text evidence="5">Salivary chemokine-binding protein which binds to host chemokine CXCL8.</text>
</comment>
<comment type="subcellular location">
    <subcellularLocation>
        <location evidence="7">Secreted</location>
    </subcellularLocation>
</comment>
<dbReference type="EMBL" id="GADI01005062">
    <property type="protein sequence ID" value="JAA68746.1"/>
    <property type="molecule type" value="mRNA"/>
</dbReference>
<dbReference type="SMR" id="A0A0K8RCE3"/>
<dbReference type="GO" id="GO:0005576">
    <property type="term" value="C:extracellular region"/>
    <property type="evidence" value="ECO:0007669"/>
    <property type="project" value="UniProtKB-SubCell"/>
</dbReference>
<dbReference type="GO" id="GO:0019958">
    <property type="term" value="F:C-X-C chemokine binding"/>
    <property type="evidence" value="ECO:0000314"/>
    <property type="project" value="UniProtKB"/>
</dbReference>
<name>E1095_IXORI</name>